<feature type="chain" id="PRO_0000098348" description="Isoleucine--tRNA ligase">
    <location>
        <begin position="1"/>
        <end position="923"/>
    </location>
</feature>
<feature type="short sequence motif" description="'HIGH' region">
    <location>
        <begin position="57"/>
        <end position="67"/>
    </location>
</feature>
<feature type="short sequence motif" description="'KMSKS' region">
    <location>
        <begin position="594"/>
        <end position="598"/>
    </location>
</feature>
<feature type="binding site" evidence="1">
    <location>
        <position position="553"/>
    </location>
    <ligand>
        <name>L-isoleucyl-5'-AMP</name>
        <dbReference type="ChEBI" id="CHEBI:178002"/>
    </ligand>
</feature>
<feature type="binding site" evidence="1">
    <location>
        <position position="597"/>
    </location>
    <ligand>
        <name>ATP</name>
        <dbReference type="ChEBI" id="CHEBI:30616"/>
    </ligand>
</feature>
<feature type="binding site" evidence="1">
    <location>
        <position position="888"/>
    </location>
    <ligand>
        <name>Zn(2+)</name>
        <dbReference type="ChEBI" id="CHEBI:29105"/>
    </ligand>
</feature>
<feature type="binding site" evidence="1">
    <location>
        <position position="891"/>
    </location>
    <ligand>
        <name>Zn(2+)</name>
        <dbReference type="ChEBI" id="CHEBI:29105"/>
    </ligand>
</feature>
<feature type="binding site" evidence="1">
    <location>
        <position position="908"/>
    </location>
    <ligand>
        <name>Zn(2+)</name>
        <dbReference type="ChEBI" id="CHEBI:29105"/>
    </ligand>
</feature>
<feature type="binding site" evidence="1">
    <location>
        <position position="911"/>
    </location>
    <ligand>
        <name>Zn(2+)</name>
        <dbReference type="ChEBI" id="CHEBI:29105"/>
    </ligand>
</feature>
<name>SYI_SHOC1</name>
<accession>Q5WFI3</accession>
<keyword id="KW-0030">Aminoacyl-tRNA synthetase</keyword>
<keyword id="KW-0067">ATP-binding</keyword>
<keyword id="KW-0963">Cytoplasm</keyword>
<keyword id="KW-0436">Ligase</keyword>
<keyword id="KW-0479">Metal-binding</keyword>
<keyword id="KW-0547">Nucleotide-binding</keyword>
<keyword id="KW-0648">Protein biosynthesis</keyword>
<keyword id="KW-1185">Reference proteome</keyword>
<keyword id="KW-0862">Zinc</keyword>
<protein>
    <recommendedName>
        <fullName evidence="1">Isoleucine--tRNA ligase</fullName>
        <ecNumber evidence="1">6.1.1.5</ecNumber>
    </recommendedName>
    <alternativeName>
        <fullName evidence="1">Isoleucyl-tRNA synthetase</fullName>
        <shortName evidence="1">IleRS</shortName>
    </alternativeName>
</protein>
<sequence>MDYKQTLLMPKTAFPMRGNLPNSEPKRQEQWEEMDIYKQVQERTEGRPYFVLHDGPPYANGDIHMGHALNKIIKDFIVRYKSMSGFHAPYVPGWDTHGLPIETALTKNKKVDRKSMSIADFRKLCEEYALEQINSQRQQFMRLGVRGDWWKPYITLEKEFEAEQIKVFGKMAKKGYIYKGKKPVYWSPSSESALAEAEIEYYDKRSASIYVAFQVADGKGVLPEDAALVIWTTTPWTIPANLGITVHPQLEYSVVRTGGRSFVVASGLLEHVQTELSWEDVVVEKTVTGKELDYIVCRHPFYDRDSIVMNGEHVTLDAGTGCVHTAPGHGVDDFVVGQKYGLDVLCPIDDKGIMTSEAPGFEGEFYDNINKMVTEKLEAVGALLKLGFITHSYPHDWRTKKPVIFRATSQWFASIANIRKELLQAVANTEWIPAWGETRLHNMVRDRGDWCISRQRAWGVPIPVFYGEDGTEIVSEETIEHVSNLFREHGSNVWFEREAKDLLPPGFTSPHSPNGHFTKETDIMDVWFDSGSSHQGVLRERNDLVFPADLYFEGSDQYRGWFNSSLSTSVAINGVAPYKGVLSHGFVMDGEGKKMSKSLGNIVVPNTVMKQLGADILRLWVASVDYQADSRVSDSILKQVAETYRKIRNTFRFLLGNLHDFDPKINAVPRDQLTGVHAFLLVRLNELTKRMHEGYNEYQFLNVYNHFRNFCTVELSSFYMDISKDTLYIEHADHPERRAFQTVMYEVVTALTKLIAPILPHTADEVWENIPGVSEQSVQLTDMPTAEELSGTDELKAHWQAFMDIRADVLKALEVARNEKVIGKSLQASLTLYPNKQARALLEATEGLKKLFIVSNVQIANEGDEVPAAAQQFADVAVLVEKAEGETCERCWQVSNTVGADEKHPTLCLSCAQTVTNHYNDVV</sequence>
<gene>
    <name evidence="1" type="primary">ileS</name>
    <name type="ordered locus">ABC2342</name>
</gene>
<comment type="function">
    <text evidence="1">Catalyzes the attachment of isoleucine to tRNA(Ile). As IleRS can inadvertently accommodate and process structurally similar amino acids such as valine, to avoid such errors it has two additional distinct tRNA(Ile)-dependent editing activities. One activity is designated as 'pretransfer' editing and involves the hydrolysis of activated Val-AMP. The other activity is designated 'posttransfer' editing and involves deacylation of mischarged Val-tRNA(Ile).</text>
</comment>
<comment type="catalytic activity">
    <reaction evidence="1">
        <text>tRNA(Ile) + L-isoleucine + ATP = L-isoleucyl-tRNA(Ile) + AMP + diphosphate</text>
        <dbReference type="Rhea" id="RHEA:11060"/>
        <dbReference type="Rhea" id="RHEA-COMP:9666"/>
        <dbReference type="Rhea" id="RHEA-COMP:9695"/>
        <dbReference type="ChEBI" id="CHEBI:30616"/>
        <dbReference type="ChEBI" id="CHEBI:33019"/>
        <dbReference type="ChEBI" id="CHEBI:58045"/>
        <dbReference type="ChEBI" id="CHEBI:78442"/>
        <dbReference type="ChEBI" id="CHEBI:78528"/>
        <dbReference type="ChEBI" id="CHEBI:456215"/>
        <dbReference type="EC" id="6.1.1.5"/>
    </reaction>
</comment>
<comment type="cofactor">
    <cofactor evidence="1">
        <name>Zn(2+)</name>
        <dbReference type="ChEBI" id="CHEBI:29105"/>
    </cofactor>
    <text evidence="1">Binds 1 zinc ion per subunit.</text>
</comment>
<comment type="subunit">
    <text evidence="1">Monomer.</text>
</comment>
<comment type="subcellular location">
    <subcellularLocation>
        <location evidence="1">Cytoplasm</location>
    </subcellularLocation>
</comment>
<comment type="domain">
    <text evidence="1">IleRS has two distinct active sites: one for aminoacylation and one for editing. The misactivated valine is translocated from the active site to the editing site, which sterically excludes the correctly activated isoleucine. The single editing site contains two valyl binding pockets, one specific for each substrate (Val-AMP or Val-tRNA(Ile)).</text>
</comment>
<comment type="similarity">
    <text evidence="1">Belongs to the class-I aminoacyl-tRNA synthetase family. IleS type 1 subfamily.</text>
</comment>
<reference key="1">
    <citation type="submission" date="2003-10" db="EMBL/GenBank/DDBJ databases">
        <title>The complete genome sequence of the alkaliphilic Bacillus clausii KSM-K16.</title>
        <authorList>
            <person name="Takaki Y."/>
            <person name="Kageyama Y."/>
            <person name="Shimamura S."/>
            <person name="Suzuki H."/>
            <person name="Nishi S."/>
            <person name="Hatada Y."/>
            <person name="Kawai S."/>
            <person name="Ito S."/>
            <person name="Horikoshi K."/>
        </authorList>
    </citation>
    <scope>NUCLEOTIDE SEQUENCE [LARGE SCALE GENOMIC DNA]</scope>
    <source>
        <strain>KSM-K16</strain>
    </source>
</reference>
<evidence type="ECO:0000255" key="1">
    <source>
        <dbReference type="HAMAP-Rule" id="MF_02002"/>
    </source>
</evidence>
<dbReference type="EC" id="6.1.1.5" evidence="1"/>
<dbReference type="EMBL" id="AP006627">
    <property type="protein sequence ID" value="BAD64877.1"/>
    <property type="molecule type" value="Genomic_DNA"/>
</dbReference>
<dbReference type="RefSeq" id="WP_011247185.1">
    <property type="nucleotide sequence ID" value="NC_006582.1"/>
</dbReference>
<dbReference type="SMR" id="Q5WFI3"/>
<dbReference type="STRING" id="66692.ABC2342"/>
<dbReference type="KEGG" id="bcl:ABC2342"/>
<dbReference type="eggNOG" id="COG0060">
    <property type="taxonomic scope" value="Bacteria"/>
</dbReference>
<dbReference type="HOGENOM" id="CLU_001493_7_1_9"/>
<dbReference type="OrthoDB" id="9810365at2"/>
<dbReference type="Proteomes" id="UP000001168">
    <property type="component" value="Chromosome"/>
</dbReference>
<dbReference type="GO" id="GO:0005829">
    <property type="term" value="C:cytosol"/>
    <property type="evidence" value="ECO:0007669"/>
    <property type="project" value="TreeGrafter"/>
</dbReference>
<dbReference type="GO" id="GO:0002161">
    <property type="term" value="F:aminoacyl-tRNA deacylase activity"/>
    <property type="evidence" value="ECO:0007669"/>
    <property type="project" value="InterPro"/>
</dbReference>
<dbReference type="GO" id="GO:0005524">
    <property type="term" value="F:ATP binding"/>
    <property type="evidence" value="ECO:0007669"/>
    <property type="project" value="UniProtKB-UniRule"/>
</dbReference>
<dbReference type="GO" id="GO:0004822">
    <property type="term" value="F:isoleucine-tRNA ligase activity"/>
    <property type="evidence" value="ECO:0007669"/>
    <property type="project" value="UniProtKB-UniRule"/>
</dbReference>
<dbReference type="GO" id="GO:0000049">
    <property type="term" value="F:tRNA binding"/>
    <property type="evidence" value="ECO:0007669"/>
    <property type="project" value="InterPro"/>
</dbReference>
<dbReference type="GO" id="GO:0008270">
    <property type="term" value="F:zinc ion binding"/>
    <property type="evidence" value="ECO:0007669"/>
    <property type="project" value="UniProtKB-UniRule"/>
</dbReference>
<dbReference type="GO" id="GO:0006428">
    <property type="term" value="P:isoleucyl-tRNA aminoacylation"/>
    <property type="evidence" value="ECO:0007669"/>
    <property type="project" value="UniProtKB-UniRule"/>
</dbReference>
<dbReference type="CDD" id="cd07960">
    <property type="entry name" value="Anticodon_Ia_Ile_BEm"/>
    <property type="match status" value="1"/>
</dbReference>
<dbReference type="CDD" id="cd00818">
    <property type="entry name" value="IleRS_core"/>
    <property type="match status" value="1"/>
</dbReference>
<dbReference type="FunFam" id="1.10.10.830:FF:000001">
    <property type="entry name" value="Isoleucine--tRNA ligase"/>
    <property type="match status" value="1"/>
</dbReference>
<dbReference type="FunFam" id="1.10.730.20:FF:000001">
    <property type="entry name" value="Isoleucine--tRNA ligase"/>
    <property type="match status" value="1"/>
</dbReference>
<dbReference type="FunFam" id="3.40.50.620:FF:000152">
    <property type="entry name" value="Isoleucine--tRNA ligase"/>
    <property type="match status" value="1"/>
</dbReference>
<dbReference type="FunFam" id="3.90.740.10:FF:000006">
    <property type="entry name" value="Isoleucine--tRNA ligase"/>
    <property type="match status" value="1"/>
</dbReference>
<dbReference type="Gene3D" id="1.10.730.20">
    <property type="match status" value="1"/>
</dbReference>
<dbReference type="Gene3D" id="3.40.50.620">
    <property type="entry name" value="HUPs"/>
    <property type="match status" value="2"/>
</dbReference>
<dbReference type="Gene3D" id="1.10.10.830">
    <property type="entry name" value="Ile-tRNA synthetase CP2 domain-like"/>
    <property type="match status" value="1"/>
</dbReference>
<dbReference type="Gene3D" id="3.90.740.10">
    <property type="entry name" value="Valyl/Leucyl/Isoleucyl-tRNA synthetase, editing domain"/>
    <property type="match status" value="1"/>
</dbReference>
<dbReference type="HAMAP" id="MF_02002">
    <property type="entry name" value="Ile_tRNA_synth_type1"/>
    <property type="match status" value="1"/>
</dbReference>
<dbReference type="InterPro" id="IPR001412">
    <property type="entry name" value="aa-tRNA-synth_I_CS"/>
</dbReference>
<dbReference type="InterPro" id="IPR002300">
    <property type="entry name" value="aa-tRNA-synth_Ia"/>
</dbReference>
<dbReference type="InterPro" id="IPR033708">
    <property type="entry name" value="Anticodon_Ile_BEm"/>
</dbReference>
<dbReference type="InterPro" id="IPR002301">
    <property type="entry name" value="Ile-tRNA-ligase"/>
</dbReference>
<dbReference type="InterPro" id="IPR023585">
    <property type="entry name" value="Ile-tRNA-ligase_type1"/>
</dbReference>
<dbReference type="InterPro" id="IPR050081">
    <property type="entry name" value="Ile-tRNA_ligase"/>
</dbReference>
<dbReference type="InterPro" id="IPR013155">
    <property type="entry name" value="M/V/L/I-tRNA-synth_anticd-bd"/>
</dbReference>
<dbReference type="InterPro" id="IPR014729">
    <property type="entry name" value="Rossmann-like_a/b/a_fold"/>
</dbReference>
<dbReference type="InterPro" id="IPR009080">
    <property type="entry name" value="tRNAsynth_Ia_anticodon-bd"/>
</dbReference>
<dbReference type="InterPro" id="IPR009008">
    <property type="entry name" value="Val/Leu/Ile-tRNA-synth_edit"/>
</dbReference>
<dbReference type="InterPro" id="IPR010663">
    <property type="entry name" value="Znf_FPG/IleRS"/>
</dbReference>
<dbReference type="NCBIfam" id="TIGR00392">
    <property type="entry name" value="ileS"/>
    <property type="match status" value="1"/>
</dbReference>
<dbReference type="PANTHER" id="PTHR42765:SF1">
    <property type="entry name" value="ISOLEUCINE--TRNA LIGASE, MITOCHONDRIAL"/>
    <property type="match status" value="1"/>
</dbReference>
<dbReference type="PANTHER" id="PTHR42765">
    <property type="entry name" value="SOLEUCYL-TRNA SYNTHETASE"/>
    <property type="match status" value="1"/>
</dbReference>
<dbReference type="Pfam" id="PF08264">
    <property type="entry name" value="Anticodon_1"/>
    <property type="match status" value="1"/>
</dbReference>
<dbReference type="Pfam" id="PF00133">
    <property type="entry name" value="tRNA-synt_1"/>
    <property type="match status" value="1"/>
</dbReference>
<dbReference type="Pfam" id="PF06827">
    <property type="entry name" value="zf-FPG_IleRS"/>
    <property type="match status" value="1"/>
</dbReference>
<dbReference type="PRINTS" id="PR00984">
    <property type="entry name" value="TRNASYNTHILE"/>
</dbReference>
<dbReference type="SUPFAM" id="SSF47323">
    <property type="entry name" value="Anticodon-binding domain of a subclass of class I aminoacyl-tRNA synthetases"/>
    <property type="match status" value="1"/>
</dbReference>
<dbReference type="SUPFAM" id="SSF52374">
    <property type="entry name" value="Nucleotidylyl transferase"/>
    <property type="match status" value="1"/>
</dbReference>
<dbReference type="SUPFAM" id="SSF50677">
    <property type="entry name" value="ValRS/IleRS/LeuRS editing domain"/>
    <property type="match status" value="1"/>
</dbReference>
<dbReference type="PROSITE" id="PS00178">
    <property type="entry name" value="AA_TRNA_LIGASE_I"/>
    <property type="match status" value="1"/>
</dbReference>
<organism>
    <name type="scientific">Shouchella clausii (strain KSM-K16)</name>
    <name type="common">Alkalihalobacillus clausii</name>
    <dbReference type="NCBI Taxonomy" id="66692"/>
    <lineage>
        <taxon>Bacteria</taxon>
        <taxon>Bacillati</taxon>
        <taxon>Bacillota</taxon>
        <taxon>Bacilli</taxon>
        <taxon>Bacillales</taxon>
        <taxon>Bacillaceae</taxon>
        <taxon>Shouchella</taxon>
    </lineage>
</organism>
<proteinExistence type="inferred from homology"/>